<proteinExistence type="evidence at transcript level"/>
<keyword id="KW-0597">Phosphoprotein</keyword>
<keyword id="KW-0653">Protein transport</keyword>
<keyword id="KW-1185">Reference proteome</keyword>
<keyword id="KW-0677">Repeat</keyword>
<keyword id="KW-0813">Transport</keyword>
<protein>
    <recommendedName>
        <fullName>Amyloid-beta A4 precursor protein-binding family A member 2</fullName>
    </recommendedName>
</protein>
<reference key="1">
    <citation type="submission" date="2004-11" db="EMBL/GenBank/DDBJ databases">
        <authorList>
            <consortium name="The German cDNA consortium"/>
        </authorList>
    </citation>
    <scope>NUCLEOTIDE SEQUENCE [LARGE SCALE MRNA]</scope>
    <source>
        <tissue>Brain cortex</tissue>
    </source>
</reference>
<sequence length="749" mass="82470">MAHQKLESVGSGMLDHRVRPGPVPHSQEPESEDMELPLEGYVPEGLELAALRPESPAPEEQECHNHSPDGDSSSDYVNNTSEEEDYDEGLPEEEEGITYYIRYCPEDDSYLEGMDCNGEEYLAHGAHPVDTDECQEAVEEWTDSAGPRPHSHEAEGSQDYPDGQLPIPEDEPSVLEAHDQEEDGHYCASKEGYQDYYPEEANGNTSASPYRLRRGDRDLEDQEEDIDQIVAEIKMSLSMTSITSASEASPEHGPEPGPGDSAEACPPIKASCSPSRHEARPKSLNLPPEAKHPGDPQRGFKPKTRTPEERPKWPHEQVCNGLEQPRKQQRSDLNGPVDNNNIPETKKVASFPSFVAVPGPCEPEDLIDGIIFAANYLGSTQLLSERNPSKNIRMMQAQEAVSRVKRMQKAAKIKKKANSEGDAQTLTEVDLFISAQRIKVLNADTQETMMDHALRTISYIADIGNIVVLMARRRMPRSASQDCIETTPGAQEGKKQYKMICHVFESEDAQLIAQSIGQAFSVAYQEFLRANGINPEDLSQKEYSDIINTQEMYNDDLIHFSNSENCKELQLEKHKGEILGVVVVESGWGSILPTVILANMMNGGPAARSGKLSIGDQIMSINGTSLVGLPLATCQGIIKGLKNQTQVKLNIVSCPPVTTVLIKRPDLKYQLGFSVQNGIICSLMRGGIAERGGVRVGHRIIEINGQSVVATAHEKIVQALSNSVGEIHMKTMPAAMFRLLTGQETPLYI</sequence>
<accession>Q5RD33</accession>
<gene>
    <name type="primary">APBA2</name>
</gene>
<feature type="chain" id="PRO_0000064618" description="Amyloid-beta A4 precursor protein-binding family A member 2">
    <location>
        <begin position="1"/>
        <end position="749"/>
    </location>
</feature>
<feature type="domain" description="PID" evidence="4">
    <location>
        <begin position="366"/>
        <end position="555"/>
    </location>
</feature>
<feature type="domain" description="PDZ 1" evidence="3">
    <location>
        <begin position="568"/>
        <end position="653"/>
    </location>
</feature>
<feature type="domain" description="PDZ 2" evidence="3">
    <location>
        <begin position="659"/>
        <end position="735"/>
    </location>
</feature>
<feature type="region of interest" description="Disordered" evidence="5">
    <location>
        <begin position="1"/>
        <end position="94"/>
    </location>
</feature>
<feature type="region of interest" description="Disordered" evidence="5">
    <location>
        <begin position="130"/>
        <end position="343"/>
    </location>
</feature>
<feature type="region of interest" description="STXBP1-binding" evidence="1">
    <location>
        <begin position="185"/>
        <end position="270"/>
    </location>
</feature>
<feature type="compositionally biased region" description="Polar residues" evidence="5">
    <location>
        <begin position="70"/>
        <end position="80"/>
    </location>
</feature>
<feature type="compositionally biased region" description="Acidic residues" evidence="5">
    <location>
        <begin position="81"/>
        <end position="94"/>
    </location>
</feature>
<feature type="compositionally biased region" description="Acidic residues" evidence="5">
    <location>
        <begin position="131"/>
        <end position="142"/>
    </location>
</feature>
<feature type="compositionally biased region" description="Acidic residues" evidence="5">
    <location>
        <begin position="218"/>
        <end position="227"/>
    </location>
</feature>
<feature type="compositionally biased region" description="Polar residues" evidence="5">
    <location>
        <begin position="237"/>
        <end position="247"/>
    </location>
</feature>
<feature type="compositionally biased region" description="Basic and acidic residues" evidence="5">
    <location>
        <begin position="305"/>
        <end position="315"/>
    </location>
</feature>
<feature type="modified residue" description="Phosphoserine" evidence="2">
    <location>
        <position position="11"/>
    </location>
</feature>
<feature type="modified residue" description="Phosphoserine" evidence="2">
    <location>
        <position position="208"/>
    </location>
</feature>
<organism>
    <name type="scientific">Pongo abelii</name>
    <name type="common">Sumatran orangutan</name>
    <name type="synonym">Pongo pygmaeus abelii</name>
    <dbReference type="NCBI Taxonomy" id="9601"/>
    <lineage>
        <taxon>Eukaryota</taxon>
        <taxon>Metazoa</taxon>
        <taxon>Chordata</taxon>
        <taxon>Craniata</taxon>
        <taxon>Vertebrata</taxon>
        <taxon>Euteleostomi</taxon>
        <taxon>Mammalia</taxon>
        <taxon>Eutheria</taxon>
        <taxon>Euarchontoglires</taxon>
        <taxon>Primates</taxon>
        <taxon>Haplorrhini</taxon>
        <taxon>Catarrhini</taxon>
        <taxon>Hominidae</taxon>
        <taxon>Pongo</taxon>
    </lineage>
</organism>
<comment type="function">
    <text evidence="1">Putative function in synaptic vesicle exocytosis by binding to STXBP1, an essential component of the synaptic vesicle exocytotic machinery. May modulate processing of the amyloid-beta precursor protein (APP) and hence formation of APP-beta (By similarity).</text>
</comment>
<comment type="subunit">
    <text evidence="1">Part of a multimeric complex containing STXBP1 and syntaxin-1. Binds to the cytoplasmic domain of amyloid-beta protein, and to the nuclear factor NF-kappa-B/p65 via its PDZ domain. Interacts with the N-terminal domain of NECAB3 (By similarity).</text>
</comment>
<comment type="domain">
    <text evidence="1">Composed of an N-terminal domain that binds STXBP1, a middle phosphotyrosine-binding domain (PID/PTB) that mediates binding with the cytoplasmic domain of the amyloid-beta precursor protein, and two C-terminal PDZ domains thought to attach proteins to the plasma membrane.</text>
</comment>
<dbReference type="EMBL" id="CR858085">
    <property type="protein sequence ID" value="CAH90324.1"/>
    <property type="molecule type" value="mRNA"/>
</dbReference>
<dbReference type="RefSeq" id="NP_001125150.1">
    <property type="nucleotide sequence ID" value="NM_001131678.1"/>
</dbReference>
<dbReference type="SMR" id="Q5RD33"/>
<dbReference type="FunCoup" id="Q5RD33">
    <property type="interactions" value="647"/>
</dbReference>
<dbReference type="STRING" id="9601.ENSPPYP00000007120"/>
<dbReference type="GeneID" id="100172037"/>
<dbReference type="KEGG" id="pon:100172037"/>
<dbReference type="CTD" id="321"/>
<dbReference type="eggNOG" id="KOG3605">
    <property type="taxonomic scope" value="Eukaryota"/>
</dbReference>
<dbReference type="InParanoid" id="Q5RD33"/>
<dbReference type="OrthoDB" id="5987010at2759"/>
<dbReference type="Proteomes" id="UP000001595">
    <property type="component" value="Unplaced"/>
</dbReference>
<dbReference type="GO" id="GO:0005737">
    <property type="term" value="C:cytoplasm"/>
    <property type="evidence" value="ECO:0007669"/>
    <property type="project" value="TreeGrafter"/>
</dbReference>
<dbReference type="GO" id="GO:0043197">
    <property type="term" value="C:dendritic spine"/>
    <property type="evidence" value="ECO:0007669"/>
    <property type="project" value="TreeGrafter"/>
</dbReference>
<dbReference type="GO" id="GO:0005886">
    <property type="term" value="C:plasma membrane"/>
    <property type="evidence" value="ECO:0007669"/>
    <property type="project" value="TreeGrafter"/>
</dbReference>
<dbReference type="GO" id="GO:0001540">
    <property type="term" value="F:amyloid-beta binding"/>
    <property type="evidence" value="ECO:0007669"/>
    <property type="project" value="TreeGrafter"/>
</dbReference>
<dbReference type="GO" id="GO:0007268">
    <property type="term" value="P:chemical synaptic transmission"/>
    <property type="evidence" value="ECO:0007669"/>
    <property type="project" value="TreeGrafter"/>
</dbReference>
<dbReference type="GO" id="GO:0015031">
    <property type="term" value="P:protein transport"/>
    <property type="evidence" value="ECO:0007669"/>
    <property type="project" value="UniProtKB-KW"/>
</dbReference>
<dbReference type="CDD" id="cd06720">
    <property type="entry name" value="PDZ1_APBA1_3-like"/>
    <property type="match status" value="1"/>
</dbReference>
<dbReference type="CDD" id="cd06793">
    <property type="entry name" value="PDZ2_APBA1_3-like"/>
    <property type="match status" value="1"/>
</dbReference>
<dbReference type="CDD" id="cd01208">
    <property type="entry name" value="PTB_X11"/>
    <property type="match status" value="1"/>
</dbReference>
<dbReference type="FunFam" id="2.30.29.30:FF:000044">
    <property type="entry name" value="amyloid beta A4 precursor protein-binding family A member 1"/>
    <property type="match status" value="1"/>
</dbReference>
<dbReference type="FunFam" id="2.30.42.10:FF:000007">
    <property type="entry name" value="Amyloid beta A4 protein-binding family A member"/>
    <property type="match status" value="1"/>
</dbReference>
<dbReference type="FunFam" id="2.30.42.10:FF:000017">
    <property type="entry name" value="Amyloid beta A4 protein-binding family A member 1"/>
    <property type="match status" value="1"/>
</dbReference>
<dbReference type="Gene3D" id="2.30.42.10">
    <property type="match status" value="2"/>
</dbReference>
<dbReference type="Gene3D" id="2.30.29.30">
    <property type="entry name" value="Pleckstrin-homology domain (PH domain)/Phosphotyrosine-binding domain (PTB)"/>
    <property type="match status" value="1"/>
</dbReference>
<dbReference type="InterPro" id="IPR051230">
    <property type="entry name" value="APP-Binding"/>
</dbReference>
<dbReference type="InterPro" id="IPR001478">
    <property type="entry name" value="PDZ"/>
</dbReference>
<dbReference type="InterPro" id="IPR036034">
    <property type="entry name" value="PDZ_sf"/>
</dbReference>
<dbReference type="InterPro" id="IPR011993">
    <property type="entry name" value="PH-like_dom_sf"/>
</dbReference>
<dbReference type="InterPro" id="IPR006020">
    <property type="entry name" value="PTB/PI_dom"/>
</dbReference>
<dbReference type="PANTHER" id="PTHR12345:SF12">
    <property type="entry name" value="AMYLOID-BETA A4 PRECURSOR PROTEIN-BINDING FAMILY A MEMBER 2"/>
    <property type="match status" value="1"/>
</dbReference>
<dbReference type="PANTHER" id="PTHR12345">
    <property type="entry name" value="SYNTENIN RELATED"/>
    <property type="match status" value="1"/>
</dbReference>
<dbReference type="Pfam" id="PF00595">
    <property type="entry name" value="PDZ"/>
    <property type="match status" value="2"/>
</dbReference>
<dbReference type="Pfam" id="PF00640">
    <property type="entry name" value="PID"/>
    <property type="match status" value="1"/>
</dbReference>
<dbReference type="SMART" id="SM00228">
    <property type="entry name" value="PDZ"/>
    <property type="match status" value="2"/>
</dbReference>
<dbReference type="SMART" id="SM00462">
    <property type="entry name" value="PTB"/>
    <property type="match status" value="1"/>
</dbReference>
<dbReference type="SUPFAM" id="SSF50156">
    <property type="entry name" value="PDZ domain-like"/>
    <property type="match status" value="2"/>
</dbReference>
<dbReference type="SUPFAM" id="SSF50729">
    <property type="entry name" value="PH domain-like"/>
    <property type="match status" value="1"/>
</dbReference>
<dbReference type="PROSITE" id="PS50106">
    <property type="entry name" value="PDZ"/>
    <property type="match status" value="2"/>
</dbReference>
<dbReference type="PROSITE" id="PS01179">
    <property type="entry name" value="PID"/>
    <property type="match status" value="1"/>
</dbReference>
<name>APBA2_PONAB</name>
<evidence type="ECO:0000250" key="1"/>
<evidence type="ECO:0000250" key="2">
    <source>
        <dbReference type="UniProtKB" id="Q99767"/>
    </source>
</evidence>
<evidence type="ECO:0000255" key="3">
    <source>
        <dbReference type="PROSITE-ProRule" id="PRU00143"/>
    </source>
</evidence>
<evidence type="ECO:0000255" key="4">
    <source>
        <dbReference type="PROSITE-ProRule" id="PRU00148"/>
    </source>
</evidence>
<evidence type="ECO:0000256" key="5">
    <source>
        <dbReference type="SAM" id="MobiDB-lite"/>
    </source>
</evidence>